<accession>A4W3H4</accession>
<reference key="1">
    <citation type="journal article" date="2007" name="PLoS ONE">
        <title>A glimpse of streptococcal toxic shock syndrome from comparative genomics of S. suis 2 Chinese isolates.</title>
        <authorList>
            <person name="Chen C."/>
            <person name="Tang J."/>
            <person name="Dong W."/>
            <person name="Wang C."/>
            <person name="Feng Y."/>
            <person name="Wang J."/>
            <person name="Zheng F."/>
            <person name="Pan X."/>
            <person name="Liu D."/>
            <person name="Li M."/>
            <person name="Song Y."/>
            <person name="Zhu X."/>
            <person name="Sun H."/>
            <person name="Feng T."/>
            <person name="Guo Z."/>
            <person name="Ju A."/>
            <person name="Ge J."/>
            <person name="Dong Y."/>
            <person name="Sun W."/>
            <person name="Jiang Y."/>
            <person name="Wang J."/>
            <person name="Yan J."/>
            <person name="Yang H."/>
            <person name="Wang X."/>
            <person name="Gao G.F."/>
            <person name="Yang R."/>
            <person name="Wang J."/>
            <person name="Yu J."/>
        </authorList>
    </citation>
    <scope>NUCLEOTIDE SEQUENCE [LARGE SCALE GENOMIC DNA]</scope>
    <source>
        <strain>98HAH33</strain>
    </source>
</reference>
<protein>
    <recommendedName>
        <fullName evidence="1">Ribosomal RNA small subunit methyltransferase H</fullName>
        <ecNumber evidence="1">2.1.1.199</ecNumber>
    </recommendedName>
    <alternativeName>
        <fullName evidence="1">16S rRNA m(4)C1402 methyltransferase</fullName>
    </alternativeName>
    <alternativeName>
        <fullName evidence="1">rRNA (cytosine-N(4)-)-methyltransferase RsmH</fullName>
    </alternativeName>
</protein>
<evidence type="ECO:0000255" key="1">
    <source>
        <dbReference type="HAMAP-Rule" id="MF_01007"/>
    </source>
</evidence>
<evidence type="ECO:0000305" key="2"/>
<gene>
    <name evidence="1" type="primary">rsmH</name>
    <name type="synonym">mraW</name>
    <name type="ordered locus">SSU98_1755</name>
</gene>
<proteinExistence type="inferred from homology"/>
<comment type="function">
    <text evidence="1">Specifically methylates the N4 position of cytidine in position 1402 (C1402) of 16S rRNA.</text>
</comment>
<comment type="catalytic activity">
    <reaction evidence="1">
        <text>cytidine(1402) in 16S rRNA + S-adenosyl-L-methionine = N(4)-methylcytidine(1402) in 16S rRNA + S-adenosyl-L-homocysteine + H(+)</text>
        <dbReference type="Rhea" id="RHEA:42928"/>
        <dbReference type="Rhea" id="RHEA-COMP:10286"/>
        <dbReference type="Rhea" id="RHEA-COMP:10287"/>
        <dbReference type="ChEBI" id="CHEBI:15378"/>
        <dbReference type="ChEBI" id="CHEBI:57856"/>
        <dbReference type="ChEBI" id="CHEBI:59789"/>
        <dbReference type="ChEBI" id="CHEBI:74506"/>
        <dbReference type="ChEBI" id="CHEBI:82748"/>
        <dbReference type="EC" id="2.1.1.199"/>
    </reaction>
</comment>
<comment type="subcellular location">
    <subcellularLocation>
        <location evidence="1">Cytoplasm</location>
    </subcellularLocation>
</comment>
<comment type="similarity">
    <text evidence="1">Belongs to the methyltransferase superfamily. RsmH family.</text>
</comment>
<comment type="sequence caution" evidence="2">
    <conflict type="erroneous initiation">
        <sequence resource="EMBL-CDS" id="ABP92913"/>
    </conflict>
</comment>
<feature type="chain" id="PRO_0000387166" description="Ribosomal RNA small subunit methyltransferase H">
    <location>
        <begin position="1"/>
        <end position="316"/>
    </location>
</feature>
<feature type="binding site" evidence="1">
    <location>
        <begin position="35"/>
        <end position="37"/>
    </location>
    <ligand>
        <name>S-adenosyl-L-methionine</name>
        <dbReference type="ChEBI" id="CHEBI:59789"/>
    </ligand>
</feature>
<feature type="binding site" evidence="1">
    <location>
        <position position="55"/>
    </location>
    <ligand>
        <name>S-adenosyl-L-methionine</name>
        <dbReference type="ChEBI" id="CHEBI:59789"/>
    </ligand>
</feature>
<feature type="binding site" evidence="1">
    <location>
        <position position="84"/>
    </location>
    <ligand>
        <name>S-adenosyl-L-methionine</name>
        <dbReference type="ChEBI" id="CHEBI:59789"/>
    </ligand>
</feature>
<feature type="binding site" evidence="1">
    <location>
        <position position="105"/>
    </location>
    <ligand>
        <name>S-adenosyl-L-methionine</name>
        <dbReference type="ChEBI" id="CHEBI:59789"/>
    </ligand>
</feature>
<feature type="binding site" evidence="1">
    <location>
        <position position="112"/>
    </location>
    <ligand>
        <name>S-adenosyl-L-methionine</name>
        <dbReference type="ChEBI" id="CHEBI:59789"/>
    </ligand>
</feature>
<keyword id="KW-0963">Cytoplasm</keyword>
<keyword id="KW-0489">Methyltransferase</keyword>
<keyword id="KW-0698">rRNA processing</keyword>
<keyword id="KW-0949">S-adenosyl-L-methionine</keyword>
<keyword id="KW-0808">Transferase</keyword>
<sequence length="316" mass="35731">MTKEFNHTTVLLHETVDMLDIKPNGIYVDATLGGAGHSEYLLSQLTDGGHLYAFDQDQTAIDHAHIRLASYIEKGQVTFIRDNFRNLKTRLAELGVTEIDGICYDLGVSSPQLDERERGFSYKQDAPLDMRMNREGHLTAYDVVNNYDYHDLVRIFFKYGEDKFSKQIARKIEQARAVKPIETTTELAELIKSAKPAKELKKKGHPAKQIFQAIRIEVNDELGAADESIQQAIDLLALDGRISVITFHSLEDRLTKQLFKEASTIDVPKGLPFIPDDLKAPLELVNRKPILPSQEELEANNRAHSAKLRVAKKVHK</sequence>
<organism>
    <name type="scientific">Streptococcus suis (strain 98HAH33)</name>
    <dbReference type="NCBI Taxonomy" id="391296"/>
    <lineage>
        <taxon>Bacteria</taxon>
        <taxon>Bacillati</taxon>
        <taxon>Bacillota</taxon>
        <taxon>Bacilli</taxon>
        <taxon>Lactobacillales</taxon>
        <taxon>Streptococcaceae</taxon>
        <taxon>Streptococcus</taxon>
    </lineage>
</organism>
<name>RSMH_STRS2</name>
<dbReference type="EC" id="2.1.1.199" evidence="1"/>
<dbReference type="EMBL" id="CP000408">
    <property type="protein sequence ID" value="ABP92913.1"/>
    <property type="status" value="ALT_INIT"/>
    <property type="molecule type" value="Genomic_DNA"/>
</dbReference>
<dbReference type="SMR" id="A4W3H4"/>
<dbReference type="KEGG" id="ssv:SSU98_1755"/>
<dbReference type="HOGENOM" id="CLU_038422_2_0_9"/>
<dbReference type="GO" id="GO:0005737">
    <property type="term" value="C:cytoplasm"/>
    <property type="evidence" value="ECO:0007669"/>
    <property type="project" value="UniProtKB-SubCell"/>
</dbReference>
<dbReference type="GO" id="GO:0071424">
    <property type="term" value="F:rRNA (cytosine-N4-)-methyltransferase activity"/>
    <property type="evidence" value="ECO:0007669"/>
    <property type="project" value="UniProtKB-UniRule"/>
</dbReference>
<dbReference type="GO" id="GO:0070475">
    <property type="term" value="P:rRNA base methylation"/>
    <property type="evidence" value="ECO:0007669"/>
    <property type="project" value="UniProtKB-UniRule"/>
</dbReference>
<dbReference type="FunFam" id="1.10.150.170:FF:000001">
    <property type="entry name" value="Ribosomal RNA small subunit methyltransferase H"/>
    <property type="match status" value="1"/>
</dbReference>
<dbReference type="Gene3D" id="1.10.150.170">
    <property type="entry name" value="Putative methyltransferase TM0872, insert domain"/>
    <property type="match status" value="1"/>
</dbReference>
<dbReference type="Gene3D" id="3.40.50.150">
    <property type="entry name" value="Vaccinia Virus protein VP39"/>
    <property type="match status" value="1"/>
</dbReference>
<dbReference type="HAMAP" id="MF_01007">
    <property type="entry name" value="16SrRNA_methyltr_H"/>
    <property type="match status" value="1"/>
</dbReference>
<dbReference type="InterPro" id="IPR002903">
    <property type="entry name" value="RsmH"/>
</dbReference>
<dbReference type="InterPro" id="IPR023397">
    <property type="entry name" value="SAM-dep_MeTrfase_MraW_recog"/>
</dbReference>
<dbReference type="InterPro" id="IPR029063">
    <property type="entry name" value="SAM-dependent_MTases_sf"/>
</dbReference>
<dbReference type="NCBIfam" id="TIGR00006">
    <property type="entry name" value="16S rRNA (cytosine(1402)-N(4))-methyltransferase RsmH"/>
    <property type="match status" value="1"/>
</dbReference>
<dbReference type="PANTHER" id="PTHR11265:SF0">
    <property type="entry name" value="12S RRNA N4-METHYLCYTIDINE METHYLTRANSFERASE"/>
    <property type="match status" value="1"/>
</dbReference>
<dbReference type="PANTHER" id="PTHR11265">
    <property type="entry name" value="S-ADENOSYL-METHYLTRANSFERASE MRAW"/>
    <property type="match status" value="1"/>
</dbReference>
<dbReference type="Pfam" id="PF01795">
    <property type="entry name" value="Methyltransf_5"/>
    <property type="match status" value="1"/>
</dbReference>
<dbReference type="PIRSF" id="PIRSF004486">
    <property type="entry name" value="MraW"/>
    <property type="match status" value="1"/>
</dbReference>
<dbReference type="SUPFAM" id="SSF81799">
    <property type="entry name" value="Putative methyltransferase TM0872, insert domain"/>
    <property type="match status" value="1"/>
</dbReference>
<dbReference type="SUPFAM" id="SSF53335">
    <property type="entry name" value="S-adenosyl-L-methionine-dependent methyltransferases"/>
    <property type="match status" value="1"/>
</dbReference>